<feature type="chain" id="PRO_1000065448" description="Holin-like protein CidA">
    <location>
        <begin position="1"/>
        <end position="121"/>
    </location>
</feature>
<feature type="transmembrane region" description="Helical" evidence="1">
    <location>
        <begin position="3"/>
        <end position="23"/>
    </location>
</feature>
<feature type="transmembrane region" description="Helical" evidence="1">
    <location>
        <begin position="30"/>
        <end position="50"/>
    </location>
</feature>
<feature type="transmembrane region" description="Helical" evidence="1">
    <location>
        <begin position="58"/>
        <end position="78"/>
    </location>
</feature>
<feature type="transmembrane region" description="Helical" evidence="1">
    <location>
        <begin position="89"/>
        <end position="109"/>
    </location>
</feature>
<reference key="1">
    <citation type="journal article" date="2006" name="J. Bacteriol.">
        <title>Pathogenomic sequence analysis of Bacillus cereus and Bacillus thuringiensis isolates closely related to Bacillus anthracis.</title>
        <authorList>
            <person name="Han C.S."/>
            <person name="Xie G."/>
            <person name="Challacombe J.F."/>
            <person name="Altherr M.R."/>
            <person name="Bhotika S.S."/>
            <person name="Bruce D."/>
            <person name="Campbell C.S."/>
            <person name="Campbell M.L."/>
            <person name="Chen J."/>
            <person name="Chertkov O."/>
            <person name="Cleland C."/>
            <person name="Dimitrijevic M."/>
            <person name="Doggett N.A."/>
            <person name="Fawcett J.J."/>
            <person name="Glavina T."/>
            <person name="Goodwin L.A."/>
            <person name="Hill K.K."/>
            <person name="Hitchcock P."/>
            <person name="Jackson P.J."/>
            <person name="Keim P."/>
            <person name="Kewalramani A.R."/>
            <person name="Longmire J."/>
            <person name="Lucas S."/>
            <person name="Malfatti S."/>
            <person name="McMurry K."/>
            <person name="Meincke L.J."/>
            <person name="Misra M."/>
            <person name="Moseman B.L."/>
            <person name="Mundt M."/>
            <person name="Munk A.C."/>
            <person name="Okinaka R.T."/>
            <person name="Parson-Quintana B."/>
            <person name="Reilly L.P."/>
            <person name="Richardson P."/>
            <person name="Robinson D.L."/>
            <person name="Rubin E."/>
            <person name="Saunders E."/>
            <person name="Tapia R."/>
            <person name="Tesmer J.G."/>
            <person name="Thayer N."/>
            <person name="Thompson L.S."/>
            <person name="Tice H."/>
            <person name="Ticknor L.O."/>
            <person name="Wills P.L."/>
            <person name="Brettin T.S."/>
            <person name="Gilna P."/>
        </authorList>
    </citation>
    <scope>NUCLEOTIDE SEQUENCE [LARGE SCALE GENOMIC DNA]</scope>
    <source>
        <strain>97-27</strain>
    </source>
</reference>
<proteinExistence type="inferred from homology"/>
<protein>
    <recommendedName>
        <fullName evidence="1">Holin-like protein CidA</fullName>
    </recommendedName>
</protein>
<name>CIDA_BACHK</name>
<comment type="function">
    <text evidence="1">Increases the activity of extracellular murein hydrolases possibly by mediating their export via hole formation. Inhibited by the antiholin-like proteins LrgAB. In an unstressed cell, the LrgAB products probably inhibit the function of the CidA protein. When a cell is stressed by the addition of antibiotics or by other factors in the environment, CidA possibly oligomerizes within the bacterial cell membrane, creating lesions that disrupt the proton motive force, which in turn results in loss of cell viability. These lesions are also hypothesized to regulate the subsequent cell lysis by either allowing the murein hydrolases access to the cell wall substrate and/or regulating their activity by a possible change in the cell wall pH that results from loss of membrane potential.</text>
</comment>
<comment type="subcellular location">
    <subcellularLocation>
        <location evidence="1">Cell membrane</location>
        <topology evidence="1">Multi-pass membrane protein</topology>
    </subcellularLocation>
</comment>
<comment type="similarity">
    <text evidence="1">Belongs to the CidA/LrgA family. CidA subfamily.</text>
</comment>
<sequence>MKWWKLSGQILLLFCFAWTGEWIAKQAHLPVPGSIIGIFLLLISLKFNLVKKEWIQDGADFLLKELILFFIPSAVAVIRYKDTLSQYGIDLILIIMISTLCVTLVTGLLTELLLKRKGSVQ</sequence>
<dbReference type="EMBL" id="AE017355">
    <property type="protein sequence ID" value="AAT61160.1"/>
    <property type="molecule type" value="Genomic_DNA"/>
</dbReference>
<dbReference type="RefSeq" id="WP_000872364.1">
    <property type="nucleotide sequence ID" value="NC_005957.1"/>
</dbReference>
<dbReference type="RefSeq" id="YP_037745.1">
    <property type="nucleotide sequence ID" value="NC_005957.1"/>
</dbReference>
<dbReference type="SMR" id="Q6HFD1"/>
<dbReference type="KEGG" id="btk:BT9727_3424"/>
<dbReference type="PATRIC" id="fig|281309.8.peg.3656"/>
<dbReference type="HOGENOM" id="CLU_113736_3_2_9"/>
<dbReference type="Proteomes" id="UP000001301">
    <property type="component" value="Chromosome"/>
</dbReference>
<dbReference type="GO" id="GO:0005886">
    <property type="term" value="C:plasma membrane"/>
    <property type="evidence" value="ECO:0007669"/>
    <property type="project" value="UniProtKB-SubCell"/>
</dbReference>
<dbReference type="GO" id="GO:0019835">
    <property type="term" value="P:cytolysis"/>
    <property type="evidence" value="ECO:0007669"/>
    <property type="project" value="UniProtKB-UniRule"/>
</dbReference>
<dbReference type="GO" id="GO:0031640">
    <property type="term" value="P:killing of cells of another organism"/>
    <property type="evidence" value="ECO:0007669"/>
    <property type="project" value="UniProtKB-KW"/>
</dbReference>
<dbReference type="GO" id="GO:0012501">
    <property type="term" value="P:programmed cell death"/>
    <property type="evidence" value="ECO:0007669"/>
    <property type="project" value="UniProtKB-UniRule"/>
</dbReference>
<dbReference type="HAMAP" id="MF_01143">
    <property type="entry name" value="CidA"/>
    <property type="match status" value="1"/>
</dbReference>
<dbReference type="InterPro" id="IPR023760">
    <property type="entry name" value="Holin-like_CidA"/>
</dbReference>
<dbReference type="InterPro" id="IPR005538">
    <property type="entry name" value="LrgA/CidA"/>
</dbReference>
<dbReference type="NCBIfam" id="NF002460">
    <property type="entry name" value="PRK01658.1"/>
    <property type="match status" value="1"/>
</dbReference>
<dbReference type="PANTHER" id="PTHR33931:SF2">
    <property type="entry name" value="HOLIN-LIKE PROTEIN CIDA"/>
    <property type="match status" value="1"/>
</dbReference>
<dbReference type="PANTHER" id="PTHR33931">
    <property type="entry name" value="HOLIN-LIKE PROTEIN CIDA-RELATED"/>
    <property type="match status" value="1"/>
</dbReference>
<dbReference type="Pfam" id="PF03788">
    <property type="entry name" value="LrgA"/>
    <property type="match status" value="1"/>
</dbReference>
<keyword id="KW-1003">Cell membrane</keyword>
<keyword id="KW-0204">Cytolysis</keyword>
<keyword id="KW-0472">Membrane</keyword>
<keyword id="KW-0812">Transmembrane</keyword>
<keyword id="KW-1133">Transmembrane helix</keyword>
<gene>
    <name evidence="1" type="primary">cidA</name>
    <name type="ordered locus">BT9727_3424</name>
</gene>
<organism>
    <name type="scientific">Bacillus thuringiensis subsp. konkukian (strain 97-27)</name>
    <dbReference type="NCBI Taxonomy" id="281309"/>
    <lineage>
        <taxon>Bacteria</taxon>
        <taxon>Bacillati</taxon>
        <taxon>Bacillota</taxon>
        <taxon>Bacilli</taxon>
        <taxon>Bacillales</taxon>
        <taxon>Bacillaceae</taxon>
        <taxon>Bacillus</taxon>
        <taxon>Bacillus cereus group</taxon>
    </lineage>
</organism>
<accession>Q6HFD1</accession>
<evidence type="ECO:0000255" key="1">
    <source>
        <dbReference type="HAMAP-Rule" id="MF_01143"/>
    </source>
</evidence>